<comment type="subcellular location">
    <subcellularLocation>
        <location evidence="1">Cell inner membrane</location>
        <topology evidence="1">Multi-pass membrane protein</topology>
    </subcellularLocation>
</comment>
<comment type="similarity">
    <text evidence="1">Belongs to the UPF0060 family.</text>
</comment>
<protein>
    <recommendedName>
        <fullName evidence="1">UPF0060 membrane protein RL1530</fullName>
    </recommendedName>
</protein>
<sequence length="106" mass="11689">MTYIIFAFAALFEIAGCFAFWAWLKLENPVWWLAPGMVSLALFAWILTLVPSEAAGRTFAAYGGIYILASLLWLWLVESRVPDRYDIGGALICLAGASLILFAPRG</sequence>
<feature type="chain" id="PRO_0000282257" description="UPF0060 membrane protein RL1530">
    <location>
        <begin position="1"/>
        <end position="106"/>
    </location>
</feature>
<feature type="transmembrane region" description="Helical" evidence="1">
    <location>
        <begin position="4"/>
        <end position="24"/>
    </location>
</feature>
<feature type="transmembrane region" description="Helical" evidence="1">
    <location>
        <begin position="30"/>
        <end position="50"/>
    </location>
</feature>
<feature type="transmembrane region" description="Helical" evidence="1">
    <location>
        <begin position="58"/>
        <end position="78"/>
    </location>
</feature>
<feature type="transmembrane region" description="Helical" evidence="1">
    <location>
        <begin position="86"/>
        <end position="106"/>
    </location>
</feature>
<organism>
    <name type="scientific">Rhizobium johnstonii (strain DSM 114642 / LMG 32736 / 3841)</name>
    <name type="common">Rhizobium leguminosarum bv. viciae</name>
    <dbReference type="NCBI Taxonomy" id="216596"/>
    <lineage>
        <taxon>Bacteria</taxon>
        <taxon>Pseudomonadati</taxon>
        <taxon>Pseudomonadota</taxon>
        <taxon>Alphaproteobacteria</taxon>
        <taxon>Hyphomicrobiales</taxon>
        <taxon>Rhizobiaceae</taxon>
        <taxon>Rhizobium/Agrobacterium group</taxon>
        <taxon>Rhizobium</taxon>
        <taxon>Rhizobium johnstonii</taxon>
    </lineage>
</organism>
<dbReference type="EMBL" id="AM236080">
    <property type="protein sequence ID" value="CAK07025.1"/>
    <property type="molecule type" value="Genomic_DNA"/>
</dbReference>
<dbReference type="RefSeq" id="WP_011651220.1">
    <property type="nucleotide sequence ID" value="NC_008380.1"/>
</dbReference>
<dbReference type="SMR" id="Q1MJ35"/>
<dbReference type="EnsemblBacteria" id="CAK07025">
    <property type="protein sequence ID" value="CAK07025"/>
    <property type="gene ID" value="RL1530"/>
</dbReference>
<dbReference type="KEGG" id="rle:RL1530"/>
<dbReference type="eggNOG" id="COG1742">
    <property type="taxonomic scope" value="Bacteria"/>
</dbReference>
<dbReference type="HOGENOM" id="CLU_117653_1_0_5"/>
<dbReference type="Proteomes" id="UP000006575">
    <property type="component" value="Chromosome"/>
</dbReference>
<dbReference type="GO" id="GO:0005886">
    <property type="term" value="C:plasma membrane"/>
    <property type="evidence" value="ECO:0007669"/>
    <property type="project" value="UniProtKB-SubCell"/>
</dbReference>
<dbReference type="HAMAP" id="MF_00010">
    <property type="entry name" value="UPF0060"/>
    <property type="match status" value="1"/>
</dbReference>
<dbReference type="InterPro" id="IPR003844">
    <property type="entry name" value="UPF0060"/>
</dbReference>
<dbReference type="NCBIfam" id="NF002586">
    <property type="entry name" value="PRK02237.1"/>
    <property type="match status" value="1"/>
</dbReference>
<dbReference type="PANTHER" id="PTHR36116">
    <property type="entry name" value="UPF0060 MEMBRANE PROTEIN YNFA"/>
    <property type="match status" value="1"/>
</dbReference>
<dbReference type="PANTHER" id="PTHR36116:SF1">
    <property type="entry name" value="UPF0060 MEMBRANE PROTEIN YNFA"/>
    <property type="match status" value="1"/>
</dbReference>
<dbReference type="Pfam" id="PF02694">
    <property type="entry name" value="UPF0060"/>
    <property type="match status" value="1"/>
</dbReference>
<dbReference type="SUPFAM" id="SSF103481">
    <property type="entry name" value="Multidrug resistance efflux transporter EmrE"/>
    <property type="match status" value="1"/>
</dbReference>
<evidence type="ECO:0000255" key="1">
    <source>
        <dbReference type="HAMAP-Rule" id="MF_00010"/>
    </source>
</evidence>
<keyword id="KW-0997">Cell inner membrane</keyword>
<keyword id="KW-1003">Cell membrane</keyword>
<keyword id="KW-0472">Membrane</keyword>
<keyword id="KW-0812">Transmembrane</keyword>
<keyword id="KW-1133">Transmembrane helix</keyword>
<reference key="1">
    <citation type="journal article" date="2006" name="Genome Biol.">
        <title>The genome of Rhizobium leguminosarum has recognizable core and accessory components.</title>
        <authorList>
            <person name="Young J.P.W."/>
            <person name="Crossman L.C."/>
            <person name="Johnston A.W.B."/>
            <person name="Thomson N.R."/>
            <person name="Ghazoui Z.F."/>
            <person name="Hull K.H."/>
            <person name="Wexler M."/>
            <person name="Curson A.R.J."/>
            <person name="Todd J.D."/>
            <person name="Poole P.S."/>
            <person name="Mauchline T.H."/>
            <person name="East A.K."/>
            <person name="Quail M.A."/>
            <person name="Churcher C."/>
            <person name="Arrowsmith C."/>
            <person name="Cherevach I."/>
            <person name="Chillingworth T."/>
            <person name="Clarke K."/>
            <person name="Cronin A."/>
            <person name="Davis P."/>
            <person name="Fraser A."/>
            <person name="Hance Z."/>
            <person name="Hauser H."/>
            <person name="Jagels K."/>
            <person name="Moule S."/>
            <person name="Mungall K."/>
            <person name="Norbertczak H."/>
            <person name="Rabbinowitsch E."/>
            <person name="Sanders M."/>
            <person name="Simmonds M."/>
            <person name="Whitehead S."/>
            <person name="Parkhill J."/>
        </authorList>
    </citation>
    <scope>NUCLEOTIDE SEQUENCE [LARGE SCALE GENOMIC DNA]</scope>
    <source>
        <strain>DSM 114642 / LMG 32736 / 3841</strain>
    </source>
</reference>
<accession>Q1MJ35</accession>
<gene>
    <name type="ordered locus">RL1530</name>
</gene>
<proteinExistence type="inferred from homology"/>
<name>Y1530_RHIJ3</name>